<protein>
    <recommendedName>
        <fullName>Putative NAD(P)H nitroreductase SAS2409</fullName>
        <ecNumber>1.-.-.-</ecNumber>
    </recommendedName>
</protein>
<dbReference type="EC" id="1.-.-.-"/>
<dbReference type="EMBL" id="BX571857">
    <property type="protein sequence ID" value="CAG44224.1"/>
    <property type="molecule type" value="Genomic_DNA"/>
</dbReference>
<dbReference type="RefSeq" id="WP_000069098.1">
    <property type="nucleotide sequence ID" value="NC_002953.3"/>
</dbReference>
<dbReference type="SMR" id="Q6G6F2"/>
<dbReference type="KEGG" id="sas:SAS2409"/>
<dbReference type="HOGENOM" id="CLU_070764_4_1_9"/>
<dbReference type="GO" id="GO:0005829">
    <property type="term" value="C:cytosol"/>
    <property type="evidence" value="ECO:0007669"/>
    <property type="project" value="TreeGrafter"/>
</dbReference>
<dbReference type="GO" id="GO:0046857">
    <property type="term" value="F:oxidoreductase activity, acting on other nitrogenous compounds as donors, with NAD or NADP as acceptor"/>
    <property type="evidence" value="ECO:0007669"/>
    <property type="project" value="TreeGrafter"/>
</dbReference>
<dbReference type="GO" id="GO:0046256">
    <property type="term" value="P:2,4,6-trinitrotoluene catabolic process"/>
    <property type="evidence" value="ECO:0007669"/>
    <property type="project" value="TreeGrafter"/>
</dbReference>
<dbReference type="CDD" id="cd02149">
    <property type="entry name" value="NfsB-like"/>
    <property type="match status" value="1"/>
</dbReference>
<dbReference type="FunFam" id="3.40.109.10:FF:000008">
    <property type="entry name" value="Putative NAD(P)H nitroreductase"/>
    <property type="match status" value="1"/>
</dbReference>
<dbReference type="Gene3D" id="3.40.109.10">
    <property type="entry name" value="NADH Oxidase"/>
    <property type="match status" value="1"/>
</dbReference>
<dbReference type="InterPro" id="IPR033878">
    <property type="entry name" value="NfsB-like"/>
</dbReference>
<dbReference type="InterPro" id="IPR029479">
    <property type="entry name" value="Nitroreductase"/>
</dbReference>
<dbReference type="InterPro" id="IPR000415">
    <property type="entry name" value="Nitroreductase-like"/>
</dbReference>
<dbReference type="InterPro" id="IPR050627">
    <property type="entry name" value="Nitroreductase/BluB"/>
</dbReference>
<dbReference type="PANTHER" id="PTHR23026">
    <property type="entry name" value="NADPH NITROREDUCTASE"/>
    <property type="match status" value="1"/>
</dbReference>
<dbReference type="PANTHER" id="PTHR23026:SF125">
    <property type="entry name" value="OXYGEN-INSENSITIVE NAD(P)H NITROREDUCTASE"/>
    <property type="match status" value="1"/>
</dbReference>
<dbReference type="Pfam" id="PF00881">
    <property type="entry name" value="Nitroreductase"/>
    <property type="match status" value="1"/>
</dbReference>
<dbReference type="SUPFAM" id="SSF55469">
    <property type="entry name" value="FMN-dependent nitroreductase-like"/>
    <property type="match status" value="1"/>
</dbReference>
<comment type="cofactor">
    <cofactor evidence="1">
        <name>FMN</name>
        <dbReference type="ChEBI" id="CHEBI:58210"/>
    </cofactor>
</comment>
<comment type="similarity">
    <text evidence="1">Belongs to the nitroreductase family.</text>
</comment>
<sequence length="223" mass="25375">MSNMNQTIMDAFHFRHATKQFDPQKKVSKEDFETILESGRLSPSSLGLEPWKFVVIQDQALRDELKAHSWGAAKQLDTASHFVLIFARKNVTSRSPYVQHMLRDIKKYEAQTIPAVEQKFDAFQADFHISDNDQALYDWSSKQTYIALGNMMTTAALLGIDSCPMEGFSLDTVTDILANKGILDTEQFGLSVMVAFGYRQQDPPKNKTRQAYEDVIEWVGPKE</sequence>
<evidence type="ECO:0000305" key="1"/>
<gene>
    <name type="ordered locus">SAS2409</name>
</gene>
<feature type="chain" id="PRO_0000277533" description="Putative NAD(P)H nitroreductase SAS2409">
    <location>
        <begin position="1"/>
        <end position="223"/>
    </location>
</feature>
<keyword id="KW-0285">Flavoprotein</keyword>
<keyword id="KW-0288">FMN</keyword>
<keyword id="KW-0520">NAD</keyword>
<keyword id="KW-0521">NADP</keyword>
<keyword id="KW-0560">Oxidoreductase</keyword>
<reference key="1">
    <citation type="journal article" date="2004" name="Proc. Natl. Acad. Sci. U.S.A.">
        <title>Complete genomes of two clinical Staphylococcus aureus strains: evidence for the rapid evolution of virulence and drug resistance.</title>
        <authorList>
            <person name="Holden M.T.G."/>
            <person name="Feil E.J."/>
            <person name="Lindsay J.A."/>
            <person name="Peacock S.J."/>
            <person name="Day N.P.J."/>
            <person name="Enright M.C."/>
            <person name="Foster T.J."/>
            <person name="Moore C.E."/>
            <person name="Hurst L."/>
            <person name="Atkin R."/>
            <person name="Barron A."/>
            <person name="Bason N."/>
            <person name="Bentley S.D."/>
            <person name="Chillingworth C."/>
            <person name="Chillingworth T."/>
            <person name="Churcher C."/>
            <person name="Clark L."/>
            <person name="Corton C."/>
            <person name="Cronin A."/>
            <person name="Doggett J."/>
            <person name="Dowd L."/>
            <person name="Feltwell T."/>
            <person name="Hance Z."/>
            <person name="Harris B."/>
            <person name="Hauser H."/>
            <person name="Holroyd S."/>
            <person name="Jagels K."/>
            <person name="James K.D."/>
            <person name="Lennard N."/>
            <person name="Line A."/>
            <person name="Mayes R."/>
            <person name="Moule S."/>
            <person name="Mungall K."/>
            <person name="Ormond D."/>
            <person name="Quail M.A."/>
            <person name="Rabbinowitsch E."/>
            <person name="Rutherford K.M."/>
            <person name="Sanders M."/>
            <person name="Sharp S."/>
            <person name="Simmonds M."/>
            <person name="Stevens K."/>
            <person name="Whitehead S."/>
            <person name="Barrell B.G."/>
            <person name="Spratt B.G."/>
            <person name="Parkhill J."/>
        </authorList>
    </citation>
    <scope>NUCLEOTIDE SEQUENCE [LARGE SCALE GENOMIC DNA]</scope>
    <source>
        <strain>MSSA476</strain>
    </source>
</reference>
<proteinExistence type="inferred from homology"/>
<name>Y2409_STAAS</name>
<organism>
    <name type="scientific">Staphylococcus aureus (strain MSSA476)</name>
    <dbReference type="NCBI Taxonomy" id="282459"/>
    <lineage>
        <taxon>Bacteria</taxon>
        <taxon>Bacillati</taxon>
        <taxon>Bacillota</taxon>
        <taxon>Bacilli</taxon>
        <taxon>Bacillales</taxon>
        <taxon>Staphylococcaceae</taxon>
        <taxon>Staphylococcus</taxon>
    </lineage>
</organism>
<accession>Q6G6F2</accession>